<gene>
    <name type="primary">cpdP</name>
</gene>
<keyword id="KW-0114">cAMP</keyword>
<keyword id="KW-0378">Hydrolase</keyword>
<keyword id="KW-0574">Periplasm</keyword>
<keyword id="KW-0732">Signal</keyword>
<comment type="function">
    <text>Seems to allow the organism to grow on cAMP.</text>
</comment>
<comment type="catalytic activity">
    <reaction>
        <text>a nucleoside 3',5'-cyclic phosphate + H2O = a nucleoside 5'-phosphate + H(+)</text>
        <dbReference type="Rhea" id="RHEA:14653"/>
        <dbReference type="ChEBI" id="CHEBI:15377"/>
        <dbReference type="ChEBI" id="CHEBI:15378"/>
        <dbReference type="ChEBI" id="CHEBI:57867"/>
        <dbReference type="ChEBI" id="CHEBI:58464"/>
        <dbReference type="EC" id="3.1.4.17"/>
    </reaction>
</comment>
<comment type="subcellular location">
    <subcellularLocation>
        <location>Periplasm</location>
    </subcellularLocation>
</comment>
<comment type="similarity">
    <text evidence="2">Belongs to the cyclic nucleotide phosphodiesterase class-II family.</text>
</comment>
<reference key="1">
    <citation type="journal article" date="1993" name="J. Bacteriol.">
        <title>Characterization of a periplasmic 3':5'-cyclic nucleotide phosphodiesterase gene, cpdP, from the marine symbiotic bacterium Vibrio fischeri.</title>
        <authorList>
            <person name="Dunlap P.V."/>
            <person name="Callahan S.M."/>
        </authorList>
    </citation>
    <scope>NUCLEOTIDE SEQUENCE [GENOMIC DNA]</scope>
    <source>
        <strain>MJ-1</strain>
    </source>
</reference>
<sequence>MFKNKLAVLFTCLSVFSFSAQSGSFDTVTLGSKGGIQDGNLTAFLIKSEADSNFVMLDAGSVVNGLIVSEQKGAFKDITVPDSSPYTKVGYLLKDRIKGYFISHAHLDHVAGLIISSPDDSKKPIYGLAATNKDLMKNYFNWSAWPNFGNKGEGFKLNKYNYVDLQPGVWSPVAETTMSVVSLPLSHSGGQSTVFILKDSEGDVFAYFGDTGPDEVEKSSAMRTAWSVLAPFVKQGKLKGIIIEVSFTNETPDKSLFGHLTPNWLVKELSVLEDMNGKGSLKDLNVAISHIKYSLKNSEDPKVIIKKQLVEVNDLGVNFIFPEQGDSLQF</sequence>
<dbReference type="EC" id="3.1.4.17"/>
<dbReference type="EMBL" id="L11527">
    <property type="protein sequence ID" value="AAA27513.1"/>
    <property type="molecule type" value="Genomic_DNA"/>
</dbReference>
<dbReference type="PIR" id="A40602">
    <property type="entry name" value="A40602"/>
</dbReference>
<dbReference type="SMR" id="Q56686"/>
<dbReference type="GO" id="GO:0042597">
    <property type="term" value="C:periplasmic space"/>
    <property type="evidence" value="ECO:0007669"/>
    <property type="project" value="UniProtKB-SubCell"/>
</dbReference>
<dbReference type="GO" id="GO:0004115">
    <property type="term" value="F:3',5'-cyclic-AMP phosphodiesterase activity"/>
    <property type="evidence" value="ECO:0007669"/>
    <property type="project" value="InterPro"/>
</dbReference>
<dbReference type="GO" id="GO:0047555">
    <property type="term" value="F:3',5'-cyclic-GMP phosphodiesterase activity"/>
    <property type="evidence" value="ECO:0007669"/>
    <property type="project" value="TreeGrafter"/>
</dbReference>
<dbReference type="GO" id="GO:0006198">
    <property type="term" value="P:cAMP catabolic process"/>
    <property type="evidence" value="ECO:0007669"/>
    <property type="project" value="InterPro"/>
</dbReference>
<dbReference type="GO" id="GO:1902660">
    <property type="term" value="P:negative regulation of glucose mediated signaling pathway"/>
    <property type="evidence" value="ECO:0007669"/>
    <property type="project" value="TreeGrafter"/>
</dbReference>
<dbReference type="CDD" id="cd07735">
    <property type="entry name" value="class_II_PDE_MBL-fold"/>
    <property type="match status" value="1"/>
</dbReference>
<dbReference type="Gene3D" id="3.60.15.10">
    <property type="entry name" value="Ribonuclease Z/Hydroxyacylglutathione hydrolase-like"/>
    <property type="match status" value="1"/>
</dbReference>
<dbReference type="InterPro" id="IPR024225">
    <property type="entry name" value="cAMP-PdiesteraseII_CS"/>
</dbReference>
<dbReference type="InterPro" id="IPR000396">
    <property type="entry name" value="Pdiesterase2"/>
</dbReference>
<dbReference type="InterPro" id="IPR036866">
    <property type="entry name" value="RibonucZ/Hydroxyglut_hydro"/>
</dbReference>
<dbReference type="PANTHER" id="PTHR28283">
    <property type="entry name" value="3',5'-CYCLIC-NUCLEOTIDE PHOSPHODIESTERASE 1"/>
    <property type="match status" value="1"/>
</dbReference>
<dbReference type="PANTHER" id="PTHR28283:SF1">
    <property type="entry name" value="3',5'-CYCLIC-NUCLEOTIDE PHOSPHODIESTERASE 1"/>
    <property type="match status" value="1"/>
</dbReference>
<dbReference type="Pfam" id="PF02112">
    <property type="entry name" value="PDEase_II"/>
    <property type="match status" value="1"/>
</dbReference>
<dbReference type="PIRSF" id="PIRSF000962">
    <property type="entry name" value="Cyc_nuc_PDEase"/>
    <property type="match status" value="1"/>
</dbReference>
<dbReference type="PRINTS" id="PR00388">
    <property type="entry name" value="PDIESTERASE2"/>
</dbReference>
<dbReference type="SUPFAM" id="SSF56281">
    <property type="entry name" value="Metallo-hydrolase/oxidoreductase"/>
    <property type="match status" value="1"/>
</dbReference>
<dbReference type="PROSITE" id="PS00607">
    <property type="entry name" value="PDEASE_II"/>
    <property type="match status" value="1"/>
</dbReference>
<organism>
    <name type="scientific">Aliivibrio fischeri</name>
    <name type="common">Vibrio fischeri</name>
    <dbReference type="NCBI Taxonomy" id="668"/>
    <lineage>
        <taxon>Bacteria</taxon>
        <taxon>Pseudomonadati</taxon>
        <taxon>Pseudomonadota</taxon>
        <taxon>Gammaproteobacteria</taxon>
        <taxon>Vibrionales</taxon>
        <taxon>Vibrionaceae</taxon>
        <taxon>Aliivibrio</taxon>
    </lineage>
</organism>
<proteinExistence type="inferred from homology"/>
<evidence type="ECO:0000255" key="1"/>
<evidence type="ECO:0000305" key="2"/>
<accession>Q56686</accession>
<protein>
    <recommendedName>
        <fullName>3',5'-cyclic-nucleotide phosphodiesterase</fullName>
        <shortName>3':5'-CNP</shortName>
        <shortName>PDEase</shortName>
        <ecNumber>3.1.4.17</ecNumber>
    </recommendedName>
</protein>
<feature type="signal peptide" evidence="1">
    <location>
        <begin position="1"/>
        <end position="22"/>
    </location>
</feature>
<feature type="chain" id="PRO_0000023354" description="3',5'-cyclic-nucleotide phosphodiesterase">
    <location>
        <begin position="23"/>
        <end position="330"/>
    </location>
</feature>
<name>CPDP_ALIFS</name>